<evidence type="ECO:0000250" key="1"/>
<evidence type="ECO:0000250" key="2">
    <source>
        <dbReference type="UniProtKB" id="Q86LE5"/>
    </source>
</evidence>
<evidence type="ECO:0000303" key="3">
    <source>
    </source>
</evidence>
<evidence type="ECO:0000312" key="4">
    <source>
        <dbReference type="EMBL" id="ABI52699.1"/>
    </source>
</evidence>
<feature type="signal peptide" evidence="2">
    <location>
        <begin position="1"/>
        <end position="19"/>
    </location>
</feature>
<feature type="chain" id="PRO_0000392948" description="Antimicrobial peptide microplusin" evidence="2">
    <location>
        <begin position="20"/>
        <end position="113"/>
    </location>
</feature>
<feature type="disulfide bond" evidence="2">
    <location>
        <begin position="25"/>
        <end position="71"/>
    </location>
</feature>
<feature type="disulfide bond" evidence="2">
    <location>
        <begin position="38"/>
        <end position="99"/>
    </location>
</feature>
<feature type="disulfide bond" evidence="2">
    <location>
        <begin position="60"/>
        <end position="65"/>
    </location>
</feature>
<dbReference type="EMBL" id="DQ886782">
    <property type="protein sequence ID" value="ABI52699.1"/>
    <property type="molecule type" value="mRNA"/>
</dbReference>
<dbReference type="SMR" id="Q09JR4"/>
<dbReference type="GO" id="GO:0005576">
    <property type="term" value="C:extracellular region"/>
    <property type="evidence" value="ECO:0000250"/>
    <property type="project" value="UniProtKB"/>
</dbReference>
<dbReference type="GO" id="GO:0016531">
    <property type="term" value="F:copper chaperone activity"/>
    <property type="evidence" value="ECO:0000250"/>
    <property type="project" value="UniProtKB"/>
</dbReference>
<dbReference type="GO" id="GO:0005506">
    <property type="term" value="F:iron ion binding"/>
    <property type="evidence" value="ECO:0000250"/>
    <property type="project" value="UniProtKB"/>
</dbReference>
<dbReference type="GO" id="GO:0046911">
    <property type="term" value="F:metal chelating activity"/>
    <property type="evidence" value="ECO:0000250"/>
    <property type="project" value="UniProtKB"/>
</dbReference>
<dbReference type="GO" id="GO:0050832">
    <property type="term" value="P:defense response to fungus"/>
    <property type="evidence" value="ECO:0000250"/>
    <property type="project" value="UniProtKB"/>
</dbReference>
<dbReference type="GO" id="GO:0050830">
    <property type="term" value="P:defense response to Gram-positive bacterium"/>
    <property type="evidence" value="ECO:0000250"/>
    <property type="project" value="UniProtKB"/>
</dbReference>
<dbReference type="GO" id="GO:0045087">
    <property type="term" value="P:innate immune response"/>
    <property type="evidence" value="ECO:0007669"/>
    <property type="project" value="UniProtKB-KW"/>
</dbReference>
<dbReference type="GO" id="GO:0031640">
    <property type="term" value="P:killing of cells of another organism"/>
    <property type="evidence" value="ECO:0007669"/>
    <property type="project" value="UniProtKB-KW"/>
</dbReference>
<dbReference type="FunFam" id="1.10.150.440:FF:000001">
    <property type="entry name" value="Antimicrobial peptide microplusin"/>
    <property type="match status" value="1"/>
</dbReference>
<dbReference type="Gene3D" id="1.10.150.440">
    <property type="match status" value="1"/>
</dbReference>
<organism>
    <name type="scientific">Argas monolakensis</name>
    <name type="common">Mono lake bird tick</name>
    <dbReference type="NCBI Taxonomy" id="34602"/>
    <lineage>
        <taxon>Eukaryota</taxon>
        <taxon>Metazoa</taxon>
        <taxon>Ecdysozoa</taxon>
        <taxon>Arthropoda</taxon>
        <taxon>Chelicerata</taxon>
        <taxon>Arachnida</taxon>
        <taxon>Acari</taxon>
        <taxon>Parasitiformes</taxon>
        <taxon>Ixodida</taxon>
        <taxon>Ixodoidea</taxon>
        <taxon>Argasidae</taxon>
        <taxon>Argasinae</taxon>
        <taxon>Argas</taxon>
    </lineage>
</organism>
<accession>Q09JR4</accession>
<name>MPSIN_ARGMO</name>
<comment type="function">
    <text evidence="1">Has bacteriostatic activity against Gram-positive bacteria, but not against Gram-negative bacteria. Has fungistatic activity against some but not all fungi. Binds and sequesters copper and iron ions. Copper-chelating activity is crucial for antimicrobial activity against M.luteus (By similarity).</text>
</comment>
<comment type="subcellular location">
    <subcellularLocation>
        <location evidence="2">Secreted</location>
    </subcellularLocation>
</comment>
<protein>
    <recommendedName>
        <fullName evidence="2">Antimicrobial peptide microplusin</fullName>
    </recommendedName>
</protein>
<reference evidence="4" key="1">
    <citation type="journal article" date="2008" name="Insect Biochem. Mol. Biol.">
        <title>Comparative sialomics between hard and soft ticks: implications for the evolution of blood-feeding behavior.</title>
        <authorList>
            <person name="Mans B.J."/>
            <person name="Andersen J.F."/>
            <person name="Francischetti I.M."/>
            <person name="Valenzuela J.G."/>
            <person name="Schwan T.G."/>
            <person name="Pham V.M."/>
            <person name="Garfield M.K."/>
            <person name="Hammer C.H."/>
            <person name="Ribeiro J.M.C."/>
        </authorList>
    </citation>
    <scope>NUCLEOTIDE SEQUENCE [LARGE SCALE MRNA]</scope>
    <source>
        <tissue>Salivary gland</tissue>
    </source>
</reference>
<keyword id="KW-0044">Antibiotic</keyword>
<keyword id="KW-0929">Antimicrobial</keyword>
<keyword id="KW-0186">Copper</keyword>
<keyword id="KW-1015">Disulfide bond</keyword>
<keyword id="KW-0295">Fungicide</keyword>
<keyword id="KW-0391">Immunity</keyword>
<keyword id="KW-0399">Innate immunity</keyword>
<keyword id="KW-0479">Metal-binding</keyword>
<keyword id="KW-0964">Secreted</keyword>
<keyword id="KW-0732">Signal</keyword>
<gene>
    <name evidence="3" type="ORF">AM-189</name>
</gene>
<sequence length="113" mass="12968">MKSLLVLALLAFGAVLVSAHHLEMCEKSTDELREQLVCHRQHATGAFNAKLDQVNRQLRCNNDICTFKKLCDAPDFLTELRKYFTESEINELHELANQCDPDAHHDHPHCHPH</sequence>
<proteinExistence type="inferred from homology"/>